<name>CTTB2_HUMAN</name>
<organism>
    <name type="scientific">Homo sapiens</name>
    <name type="common">Human</name>
    <dbReference type="NCBI Taxonomy" id="9606"/>
    <lineage>
        <taxon>Eukaryota</taxon>
        <taxon>Metazoa</taxon>
        <taxon>Chordata</taxon>
        <taxon>Craniata</taxon>
        <taxon>Vertebrata</taxon>
        <taxon>Euteleostomi</taxon>
        <taxon>Mammalia</taxon>
        <taxon>Eutheria</taxon>
        <taxon>Euarchontoglires</taxon>
        <taxon>Primates</taxon>
        <taxon>Haplorrhini</taxon>
        <taxon>Catarrhini</taxon>
        <taxon>Hominidae</taxon>
        <taxon>Homo</taxon>
    </lineage>
</organism>
<gene>
    <name evidence="6" type="primary">CTTNBP2</name>
    <name type="synonym">C7orf8</name>
    <name type="synonym">CORTBP2</name>
    <name type="synonym">KIAA1758</name>
</gene>
<comment type="function">
    <text evidence="2">Regulates the dendritic spine distribution of CTTN/cortactin in hippocampal neurons, and thus controls dendritic spinogenesis and dendritic spine maintenance. Associates with the striatin-interacting phosphatase and kinase (STRIPAK) core complex to regulate dendritic spine distribution of the STRIPAK complex in hippocampal neurons.</text>
</comment>
<comment type="subunit">
    <text evidence="2">Interacts with CTTN/cortactin SH3 domain. Interacts with STRN, STRN4/zinedin and MOB4/phocein; this interactions mediate the association with the STRIPAK core complex and may regulate dendritic spine distribution of the STRIPAK complex in hippocampal neurons. Activation of glutamate receptors weakens the interaction with STRN and STRN4.</text>
</comment>
<comment type="interaction">
    <interactant intactId="EBI-1774260">
        <id>Q8WZ74</id>
    </interactant>
    <interactant intactId="EBI-12268276">
        <id>Q8WYA1-3</id>
        <label>BMAL2</label>
    </interactant>
    <organismsDiffer>false</organismsDiffer>
    <experiments>3</experiments>
</comment>
<comment type="interaction">
    <interactant intactId="EBI-1774260">
        <id>Q8WZ74</id>
    </interactant>
    <interactant intactId="EBI-12845222">
        <id>Q9NVL1-2</id>
        <label>FAM86C1P</label>
    </interactant>
    <organismsDiffer>false</organismsDiffer>
    <experiments>3</experiments>
</comment>
<comment type="interaction">
    <interactant intactId="EBI-1774260">
        <id>Q8WZ74</id>
    </interactant>
    <interactant intactId="EBI-7116203">
        <id>O75031</id>
        <label>HSF2BP</label>
    </interactant>
    <organismsDiffer>false</organismsDiffer>
    <experiments>3</experiments>
</comment>
<comment type="interaction">
    <interactant intactId="EBI-1774260">
        <id>Q8WZ74</id>
    </interactant>
    <interactant intactId="EBI-6509505">
        <id>Q0VD86</id>
        <label>INCA1</label>
    </interactant>
    <organismsDiffer>false</organismsDiffer>
    <experiments>3</experiments>
</comment>
<comment type="interaction">
    <interactant intactId="EBI-1774260">
        <id>Q8WZ74</id>
    </interactant>
    <interactant intactId="EBI-702178">
        <id>P02533</id>
        <label>KRT14</label>
    </interactant>
    <organismsDiffer>false</organismsDiffer>
    <experiments>3</experiments>
</comment>
<comment type="interaction">
    <interactant intactId="EBI-1774260">
        <id>Q8WZ74</id>
    </interactant>
    <interactant intactId="EBI-739552">
        <id>P43364</id>
        <label>MAGEA11</label>
    </interactant>
    <organismsDiffer>false</organismsDiffer>
    <experiments>3</experiments>
</comment>
<comment type="interaction">
    <interactant intactId="EBI-1774260">
        <id>Q8WZ74</id>
    </interactant>
    <interactant intactId="EBI-19944212">
        <id>A8MW99</id>
        <label>MEI4</label>
    </interactant>
    <organismsDiffer>false</organismsDiffer>
    <experiments>3</experiments>
</comment>
<comment type="interaction">
    <interactant intactId="EBI-1774260">
        <id>Q8WZ74</id>
    </interactant>
    <interactant intactId="EBI-2692890">
        <id>Q96KN3</id>
        <label>PKNOX2</label>
    </interactant>
    <organismsDiffer>false</organismsDiffer>
    <experiments>3</experiments>
</comment>
<comment type="subcellular location">
    <subcellularLocation>
        <location evidence="1">Cytoplasm</location>
        <location evidence="1">Cell cortex</location>
    </subcellularLocation>
    <subcellularLocation>
        <location evidence="2">Cell projection</location>
        <location evidence="2">Dendritic spine</location>
    </subcellularLocation>
    <text evidence="2">Remains associated with dendritic spines even after glutamate stimulation.</text>
</comment>
<comment type="tissue specificity">
    <text evidence="5">Highest expression in brain. Also expressed in kidney, pancreas, lung, heart, liver, skeletal muscle and placenta.</text>
</comment>
<dbReference type="EMBL" id="AF377960">
    <property type="protein sequence ID" value="AAL32176.1"/>
    <property type="molecule type" value="mRNA"/>
</dbReference>
<dbReference type="EMBL" id="DQ354388">
    <property type="protein sequence ID" value="ABC79049.1"/>
    <property type="molecule type" value="Genomic_DNA"/>
</dbReference>
<dbReference type="EMBL" id="DQ354389">
    <property type="protein sequence ID" value="ABC79051.1"/>
    <property type="molecule type" value="Genomic_DNA"/>
</dbReference>
<dbReference type="EMBL" id="DQ354390">
    <property type="protein sequence ID" value="ABC79053.1"/>
    <property type="molecule type" value="Genomic_DNA"/>
</dbReference>
<dbReference type="EMBL" id="DQ354391">
    <property type="protein sequence ID" value="ABC79055.1"/>
    <property type="molecule type" value="Genomic_DNA"/>
</dbReference>
<dbReference type="EMBL" id="DQ356257">
    <property type="protein sequence ID" value="ABC87052.1"/>
    <property type="molecule type" value="Genomic_DNA"/>
</dbReference>
<dbReference type="EMBL" id="DQ356259">
    <property type="protein sequence ID" value="ABC87056.1"/>
    <property type="molecule type" value="Genomic_DNA"/>
</dbReference>
<dbReference type="EMBL" id="DQ356260">
    <property type="protein sequence ID" value="ABC87058.1"/>
    <property type="molecule type" value="Genomic_DNA"/>
</dbReference>
<dbReference type="EMBL" id="DQ356261">
    <property type="protein sequence ID" value="ABC87060.1"/>
    <property type="molecule type" value="Genomic_DNA"/>
</dbReference>
<dbReference type="EMBL" id="DQ356262">
    <property type="protein sequence ID" value="ABC87062.1"/>
    <property type="molecule type" value="Genomic_DNA"/>
</dbReference>
<dbReference type="EMBL" id="DQ356264">
    <property type="protein sequence ID" value="ABC87066.1"/>
    <property type="molecule type" value="Genomic_DNA"/>
</dbReference>
<dbReference type="EMBL" id="AC004240">
    <property type="protein sequence ID" value="AAC04501.2"/>
    <property type="molecule type" value="Genomic_DNA"/>
</dbReference>
<dbReference type="EMBL" id="BC106000">
    <property type="protein sequence ID" value="AAI06001.1"/>
    <property type="molecule type" value="mRNA"/>
</dbReference>
<dbReference type="EMBL" id="AB051545">
    <property type="protein sequence ID" value="BAB21849.1"/>
    <property type="molecule type" value="mRNA"/>
</dbReference>
<dbReference type="CCDS" id="CCDS5774.1"/>
<dbReference type="RefSeq" id="NP_219499.1">
    <property type="nucleotide sequence ID" value="NM_033427.3"/>
</dbReference>
<dbReference type="SMR" id="Q8WZ74"/>
<dbReference type="BioGRID" id="123842">
    <property type="interactions" value="51"/>
</dbReference>
<dbReference type="FunCoup" id="Q8WZ74">
    <property type="interactions" value="114"/>
</dbReference>
<dbReference type="IntAct" id="Q8WZ74">
    <property type="interactions" value="40"/>
</dbReference>
<dbReference type="STRING" id="9606.ENSP00000160373"/>
<dbReference type="GlyCosmos" id="Q8WZ74">
    <property type="glycosylation" value="2 sites, 1 glycan"/>
</dbReference>
<dbReference type="GlyGen" id="Q8WZ74">
    <property type="glycosylation" value="5 sites, 1 N-linked glycan (1 site), 1 O-linked glycan (2 sites)"/>
</dbReference>
<dbReference type="iPTMnet" id="Q8WZ74"/>
<dbReference type="PhosphoSitePlus" id="Q8WZ74"/>
<dbReference type="BioMuta" id="CTTNBP2"/>
<dbReference type="DMDM" id="74751641"/>
<dbReference type="jPOST" id="Q8WZ74"/>
<dbReference type="MassIVE" id="Q8WZ74"/>
<dbReference type="PaxDb" id="9606-ENSP00000160373"/>
<dbReference type="PeptideAtlas" id="Q8WZ74"/>
<dbReference type="ProteomicsDB" id="75231"/>
<dbReference type="Pumba" id="Q8WZ74"/>
<dbReference type="Antibodypedia" id="3970">
    <property type="antibodies" value="89 antibodies from 18 providers"/>
</dbReference>
<dbReference type="DNASU" id="83992"/>
<dbReference type="Ensembl" id="ENST00000160373.8">
    <property type="protein sequence ID" value="ENSP00000160373.3"/>
    <property type="gene ID" value="ENSG00000077063.11"/>
</dbReference>
<dbReference type="GeneID" id="83992"/>
<dbReference type="KEGG" id="hsa:83992"/>
<dbReference type="MANE-Select" id="ENST00000160373.8">
    <property type="protein sequence ID" value="ENSP00000160373.3"/>
    <property type="RefSeq nucleotide sequence ID" value="NM_033427.3"/>
    <property type="RefSeq protein sequence ID" value="NP_219499.1"/>
</dbReference>
<dbReference type="UCSC" id="uc003vjf.4">
    <property type="organism name" value="human"/>
</dbReference>
<dbReference type="AGR" id="HGNC:15679"/>
<dbReference type="CTD" id="83992"/>
<dbReference type="DisGeNET" id="83992"/>
<dbReference type="GeneCards" id="CTTNBP2"/>
<dbReference type="HGNC" id="HGNC:15679">
    <property type="gene designation" value="CTTNBP2"/>
</dbReference>
<dbReference type="HPA" id="ENSG00000077063">
    <property type="expression patterns" value="Low tissue specificity"/>
</dbReference>
<dbReference type="MalaCards" id="CTTNBP2"/>
<dbReference type="MIM" id="609772">
    <property type="type" value="gene"/>
</dbReference>
<dbReference type="neXtProt" id="NX_Q8WZ74"/>
<dbReference type="OpenTargets" id="ENSG00000077063"/>
<dbReference type="PharmGKB" id="PA26774"/>
<dbReference type="VEuPathDB" id="HostDB:ENSG00000077063"/>
<dbReference type="eggNOG" id="ENOG502QWG2">
    <property type="taxonomic scope" value="Eukaryota"/>
</dbReference>
<dbReference type="GeneTree" id="ENSGT00940000158293"/>
<dbReference type="HOGENOM" id="CLU_004926_0_0_1"/>
<dbReference type="InParanoid" id="Q8WZ74"/>
<dbReference type="OMA" id="MCPVEAL"/>
<dbReference type="OrthoDB" id="6021133at2759"/>
<dbReference type="PAN-GO" id="Q8WZ74">
    <property type="GO annotations" value="2 GO annotations based on evolutionary models"/>
</dbReference>
<dbReference type="PhylomeDB" id="Q8WZ74"/>
<dbReference type="TreeFam" id="TF325130"/>
<dbReference type="PathwayCommons" id="Q8WZ74"/>
<dbReference type="SignaLink" id="Q8WZ74"/>
<dbReference type="SIGNOR" id="Q8WZ74"/>
<dbReference type="BioGRID-ORCS" id="83992">
    <property type="hits" value="8 hits in 1145 CRISPR screens"/>
</dbReference>
<dbReference type="ChiTaRS" id="CTTNBP2">
    <property type="organism name" value="human"/>
</dbReference>
<dbReference type="GeneWiki" id="CTTNBP2"/>
<dbReference type="GenomeRNAi" id="83992"/>
<dbReference type="Pharos" id="Q8WZ74">
    <property type="development level" value="Tbio"/>
</dbReference>
<dbReference type="PRO" id="PR:Q8WZ74"/>
<dbReference type="Proteomes" id="UP000005640">
    <property type="component" value="Chromosome 7"/>
</dbReference>
<dbReference type="RNAct" id="Q8WZ74">
    <property type="molecule type" value="protein"/>
</dbReference>
<dbReference type="Bgee" id="ENSG00000077063">
    <property type="expression patterns" value="Expressed in cortical plate and 167 other cell types or tissues"/>
</dbReference>
<dbReference type="ExpressionAtlas" id="Q8WZ74">
    <property type="expression patterns" value="baseline and differential"/>
</dbReference>
<dbReference type="GO" id="GO:0005938">
    <property type="term" value="C:cell cortex"/>
    <property type="evidence" value="ECO:0007669"/>
    <property type="project" value="UniProtKB-SubCell"/>
</dbReference>
<dbReference type="GO" id="GO:0043197">
    <property type="term" value="C:dendritic spine"/>
    <property type="evidence" value="ECO:0000250"/>
    <property type="project" value="UniProtKB"/>
</dbReference>
<dbReference type="GO" id="GO:0090443">
    <property type="term" value="C:FAR/SIN/STRIPAK complex"/>
    <property type="evidence" value="ECO:0000250"/>
    <property type="project" value="UniProtKB"/>
</dbReference>
<dbReference type="GO" id="GO:0098978">
    <property type="term" value="C:glutamatergic synapse"/>
    <property type="evidence" value="ECO:0000318"/>
    <property type="project" value="GO_Central"/>
</dbReference>
<dbReference type="GO" id="GO:0098871">
    <property type="term" value="C:postsynaptic actin cytoskeleton"/>
    <property type="evidence" value="ECO:0007669"/>
    <property type="project" value="Ensembl"/>
</dbReference>
<dbReference type="GO" id="GO:0008021">
    <property type="term" value="C:synaptic vesicle"/>
    <property type="evidence" value="ECO:0007669"/>
    <property type="project" value="Ensembl"/>
</dbReference>
<dbReference type="GO" id="GO:0017124">
    <property type="term" value="F:SH3 domain binding"/>
    <property type="evidence" value="ECO:0007669"/>
    <property type="project" value="Ensembl"/>
</dbReference>
<dbReference type="GO" id="GO:1905274">
    <property type="term" value="P:regulation of modification of postsynaptic actin cytoskeleton"/>
    <property type="evidence" value="ECO:0007669"/>
    <property type="project" value="Ensembl"/>
</dbReference>
<dbReference type="GO" id="GO:0050807">
    <property type="term" value="P:regulation of synapse organization"/>
    <property type="evidence" value="ECO:0000318"/>
    <property type="project" value="GO_Central"/>
</dbReference>
<dbReference type="Gene3D" id="1.25.40.20">
    <property type="entry name" value="Ankyrin repeat-containing domain"/>
    <property type="match status" value="1"/>
</dbReference>
<dbReference type="InterPro" id="IPR002110">
    <property type="entry name" value="Ankyrin_rpt"/>
</dbReference>
<dbReference type="InterPro" id="IPR036770">
    <property type="entry name" value="Ankyrin_rpt-contain_sf"/>
</dbReference>
<dbReference type="InterPro" id="IPR050719">
    <property type="entry name" value="Cortactin-Actin_Reg"/>
</dbReference>
<dbReference type="InterPro" id="IPR019131">
    <property type="entry name" value="Cortactin-binding_p2_N"/>
</dbReference>
<dbReference type="PANTHER" id="PTHR23166:SF9">
    <property type="entry name" value="CTTNBP2 N-TERMINAL-LIKE PROTEIN"/>
    <property type="match status" value="1"/>
</dbReference>
<dbReference type="PANTHER" id="PTHR23166">
    <property type="entry name" value="FILAMIN/GPBP-INTERACTING PROTEIN"/>
    <property type="match status" value="1"/>
</dbReference>
<dbReference type="Pfam" id="PF25408">
    <property type="entry name" value="AAA_lid_NAV1"/>
    <property type="match status" value="1"/>
</dbReference>
<dbReference type="Pfam" id="PF00023">
    <property type="entry name" value="Ank"/>
    <property type="match status" value="2"/>
</dbReference>
<dbReference type="Pfam" id="PF12796">
    <property type="entry name" value="Ank_2"/>
    <property type="match status" value="1"/>
</dbReference>
<dbReference type="Pfam" id="PF09727">
    <property type="entry name" value="CortBP2"/>
    <property type="match status" value="1"/>
</dbReference>
<dbReference type="SMART" id="SM00248">
    <property type="entry name" value="ANK"/>
    <property type="match status" value="6"/>
</dbReference>
<dbReference type="SUPFAM" id="SSF48403">
    <property type="entry name" value="Ankyrin repeat"/>
    <property type="match status" value="1"/>
</dbReference>
<dbReference type="PROSITE" id="PS50297">
    <property type="entry name" value="ANK_REP_REGION"/>
    <property type="match status" value="1"/>
</dbReference>
<dbReference type="PROSITE" id="PS50088">
    <property type="entry name" value="ANK_REPEAT"/>
    <property type="match status" value="4"/>
</dbReference>
<reference key="1">
    <citation type="journal article" date="2001" name="Genomics">
        <title>Identification of the human cortactin-binding protein-2 gene from the autism candidate region at 7q31.</title>
        <authorList>
            <person name="Cheung J."/>
            <person name="Petek E."/>
            <person name="Nakabayashi K."/>
            <person name="Tsui L.-C."/>
            <person name="Vincent J.B."/>
            <person name="Scherer S.W."/>
        </authorList>
    </citation>
    <scope>NUCLEOTIDE SEQUENCE [MRNA]</scope>
    <scope>VARIANT VAL-1213</scope>
    <scope>TISSUE SPECIFICITY</scope>
</reference>
<reference key="2">
    <citation type="submission" date="2006-01" db="EMBL/GenBank/DDBJ databases">
        <authorList>
            <person name="Stacy R."/>
            <person name="Subramanian S."/>
            <person name="Deodato C."/>
            <person name="Burkhardt P."/>
            <person name="Song Y."/>
            <person name="Paddock M."/>
            <person name="Chang J."/>
            <person name="Zhou Y."/>
            <person name="Haugen E."/>
            <person name="Waring D."/>
            <person name="Chapman P."/>
            <person name="Hayden H."/>
            <person name="Levy R."/>
            <person name="Wu Z."/>
            <person name="Rouse G."/>
            <person name="James R."/>
            <person name="Phelps K."/>
            <person name="Olson M.V."/>
            <person name="Kaul R."/>
        </authorList>
    </citation>
    <scope>NUCLEOTIDE SEQUENCE [GENOMIC DNA]</scope>
</reference>
<reference key="3">
    <citation type="journal article" date="2003" name="Nature">
        <title>The DNA sequence of human chromosome 7.</title>
        <authorList>
            <person name="Hillier L.W."/>
            <person name="Fulton R.S."/>
            <person name="Fulton L.A."/>
            <person name="Graves T.A."/>
            <person name="Pepin K.H."/>
            <person name="Wagner-McPherson C."/>
            <person name="Layman D."/>
            <person name="Maas J."/>
            <person name="Jaeger S."/>
            <person name="Walker R."/>
            <person name="Wylie K."/>
            <person name="Sekhon M."/>
            <person name="Becker M.C."/>
            <person name="O'Laughlin M.D."/>
            <person name="Schaller M.E."/>
            <person name="Fewell G.A."/>
            <person name="Delehaunty K.D."/>
            <person name="Miner T.L."/>
            <person name="Nash W.E."/>
            <person name="Cordes M."/>
            <person name="Du H."/>
            <person name="Sun H."/>
            <person name="Edwards J."/>
            <person name="Bradshaw-Cordum H."/>
            <person name="Ali J."/>
            <person name="Andrews S."/>
            <person name="Isak A."/>
            <person name="Vanbrunt A."/>
            <person name="Nguyen C."/>
            <person name="Du F."/>
            <person name="Lamar B."/>
            <person name="Courtney L."/>
            <person name="Kalicki J."/>
            <person name="Ozersky P."/>
            <person name="Bielicki L."/>
            <person name="Scott K."/>
            <person name="Holmes A."/>
            <person name="Harkins R."/>
            <person name="Harris A."/>
            <person name="Strong C.M."/>
            <person name="Hou S."/>
            <person name="Tomlinson C."/>
            <person name="Dauphin-Kohlberg S."/>
            <person name="Kozlowicz-Reilly A."/>
            <person name="Leonard S."/>
            <person name="Rohlfing T."/>
            <person name="Rock S.M."/>
            <person name="Tin-Wollam A.-M."/>
            <person name="Abbott A."/>
            <person name="Minx P."/>
            <person name="Maupin R."/>
            <person name="Strowmatt C."/>
            <person name="Latreille P."/>
            <person name="Miller N."/>
            <person name="Johnson D."/>
            <person name="Murray J."/>
            <person name="Woessner J.P."/>
            <person name="Wendl M.C."/>
            <person name="Yang S.-P."/>
            <person name="Schultz B.R."/>
            <person name="Wallis J.W."/>
            <person name="Spieth J."/>
            <person name="Bieri T.A."/>
            <person name="Nelson J.O."/>
            <person name="Berkowicz N."/>
            <person name="Wohldmann P.E."/>
            <person name="Cook L.L."/>
            <person name="Hickenbotham M.T."/>
            <person name="Eldred J."/>
            <person name="Williams D."/>
            <person name="Bedell J.A."/>
            <person name="Mardis E.R."/>
            <person name="Clifton S.W."/>
            <person name="Chissoe S.L."/>
            <person name="Marra M.A."/>
            <person name="Raymond C."/>
            <person name="Haugen E."/>
            <person name="Gillett W."/>
            <person name="Zhou Y."/>
            <person name="James R."/>
            <person name="Phelps K."/>
            <person name="Iadanoto S."/>
            <person name="Bubb K."/>
            <person name="Simms E."/>
            <person name="Levy R."/>
            <person name="Clendenning J."/>
            <person name="Kaul R."/>
            <person name="Kent W.J."/>
            <person name="Furey T.S."/>
            <person name="Baertsch R.A."/>
            <person name="Brent M.R."/>
            <person name="Keibler E."/>
            <person name="Flicek P."/>
            <person name="Bork P."/>
            <person name="Suyama M."/>
            <person name="Bailey J.A."/>
            <person name="Portnoy M.E."/>
            <person name="Torrents D."/>
            <person name="Chinwalla A.T."/>
            <person name="Gish W.R."/>
            <person name="Eddy S.R."/>
            <person name="McPherson J.D."/>
            <person name="Olson M.V."/>
            <person name="Eichler E.E."/>
            <person name="Green E.D."/>
            <person name="Waterston R.H."/>
            <person name="Wilson R.K."/>
        </authorList>
    </citation>
    <scope>NUCLEOTIDE SEQUENCE [LARGE SCALE GENOMIC DNA]</scope>
</reference>
<reference key="4">
    <citation type="journal article" date="2004" name="Genome Res.">
        <title>The status, quality, and expansion of the NIH full-length cDNA project: the Mammalian Gene Collection (MGC).</title>
        <authorList>
            <consortium name="The MGC Project Team"/>
        </authorList>
    </citation>
    <scope>NUCLEOTIDE SEQUENCE [LARGE SCALE MRNA]</scope>
    <source>
        <tissue>Placenta</tissue>
    </source>
</reference>
<reference key="5">
    <citation type="journal article" date="2000" name="DNA Res.">
        <title>Prediction of the coding sequences of unidentified human genes. XIX. The complete sequences of 100 new cDNA clones from brain which code for large proteins in vitro.</title>
        <authorList>
            <person name="Nagase T."/>
            <person name="Kikuno R."/>
            <person name="Hattori A."/>
            <person name="Kondo Y."/>
            <person name="Okumura K."/>
            <person name="Ohara O."/>
        </authorList>
    </citation>
    <scope>NUCLEOTIDE SEQUENCE [LARGE SCALE MRNA] OF 2-1663</scope>
</reference>
<reference key="6">
    <citation type="journal article" date="2009" name="Anal. Chem.">
        <title>Lys-N and trypsin cover complementary parts of the phosphoproteome in a refined SCX-based approach.</title>
        <authorList>
            <person name="Gauci S."/>
            <person name="Helbig A.O."/>
            <person name="Slijper M."/>
            <person name="Krijgsveld J."/>
            <person name="Heck A.J."/>
            <person name="Mohammed S."/>
        </authorList>
    </citation>
    <scope>IDENTIFICATION BY MASS SPECTROMETRY [LARGE SCALE ANALYSIS]</scope>
</reference>
<reference key="7">
    <citation type="journal article" date="2011" name="Sci. Signal.">
        <title>System-wide temporal characterization of the proteome and phosphoproteome of human embryonic stem cell differentiation.</title>
        <authorList>
            <person name="Rigbolt K.T."/>
            <person name="Prokhorova T.A."/>
            <person name="Akimov V."/>
            <person name="Henningsen J."/>
            <person name="Johansen P.T."/>
            <person name="Kratchmarova I."/>
            <person name="Kassem M."/>
            <person name="Mann M."/>
            <person name="Olsen J.V."/>
            <person name="Blagoev B."/>
        </authorList>
    </citation>
    <scope>PHOSPHORYLATION [LARGE SCALE ANALYSIS] AT SER-1524</scope>
    <scope>IDENTIFICATION BY MASS SPECTROMETRY [LARGE SCALE ANALYSIS]</scope>
</reference>
<reference key="8">
    <citation type="journal article" date="2013" name="J. Proteome Res.">
        <title>Toward a comprehensive characterization of a human cancer cell phosphoproteome.</title>
        <authorList>
            <person name="Zhou H."/>
            <person name="Di Palma S."/>
            <person name="Preisinger C."/>
            <person name="Peng M."/>
            <person name="Polat A.N."/>
            <person name="Heck A.J."/>
            <person name="Mohammed S."/>
        </authorList>
    </citation>
    <scope>PHOSPHORYLATION [LARGE SCALE ANALYSIS] AT SER-1524</scope>
    <scope>IDENTIFICATION BY MASS SPECTROMETRY [LARGE SCALE ANALYSIS]</scope>
    <source>
        <tissue>Cervix carcinoma</tissue>
    </source>
</reference>
<proteinExistence type="evidence at protein level"/>
<evidence type="ECO:0000250" key="1">
    <source>
        <dbReference type="UniProtKB" id="B9EJA2"/>
    </source>
</evidence>
<evidence type="ECO:0000250" key="2">
    <source>
        <dbReference type="UniProtKB" id="Q2IBD4"/>
    </source>
</evidence>
<evidence type="ECO:0000255" key="3"/>
<evidence type="ECO:0000256" key="4">
    <source>
        <dbReference type="SAM" id="MobiDB-lite"/>
    </source>
</evidence>
<evidence type="ECO:0000269" key="5">
    <source>
    </source>
</evidence>
<evidence type="ECO:0000312" key="6">
    <source>
        <dbReference type="HGNC" id="HGNC:15679"/>
    </source>
</evidence>
<evidence type="ECO:0007744" key="7">
    <source>
    </source>
</evidence>
<evidence type="ECO:0007744" key="8">
    <source>
    </source>
</evidence>
<sequence length="1663" mass="181051">MATDGASCEPDLSRAPEDAAGAAAEAAKKEFDVDTLSKSELRMLLSVMEGELEARDLVIEALRARRKEVFIQERYGRFNLNDPFLALQRDYEAGAGDKEKKPVCTNPLSILEAVMAHCKKMQERMSAQLAAAESRQKKLEMEKLQLQALEQEHKKLAARLEEERGKNKQVVLMLVKECKQLSGKVIEEAQKLEDVMAKLEEEKKKTNELEEELSAEKRRSTEMEAQMEKQLSEFDTEREQLRAKLNREEAHTTDLKEEIDKMRKMIEQLKRGSDSKPSLSLPRKTKDRRLVSISVGTEGTVTRSVACQTDLVTENADHMKKLPLTMPVKPSTGSPLVSANAKGSVCTSATMARPGIDRQASYGDLIGASVPAFPPPSANKIEENGPSTGSTPDPTSSTPPLPSNAAPPTAQTPGIAPQNSQAPPMHSLHSPCANTSLHPGLNPRIQAARFRFQGNANDPDQNGNTTQSPPSRDVSPTSRDNLVAKQLARNTVTQALSRFTSPQAGAPSRPGVPPTGDVGTHPPVGRTSLKTHGVARVDRGNPPPIPPKKPGLSQTPSPPHPQLKVIIDSSRASNTGAKVDNKTVASTPSSLPQGNRVINEENLPKSSSPQLPPKPSIDLTVAPAGCAVSALATSQVGAWPAATPGLNQPACSDSSLVIPTTIAFCSSINPVSASSCRPGASDSLLVTASGWSPSLTPLLMSGGPAPLAGRPTLLQQAAAQGNVTLLSMLLNEEGLDINYSCEDGHSALYSAAKNGHTDCVRLLLSAEAQVNAADKNGFTPLCAAAAQGHFECVELLISYDANINHAADGGQTPLYLACKNGNKECIKLLLEAGTNRSVKTTDGWTPVHAAVDTGNVDSLKLLMYHRIPAHGNSFNEEESESSVFDLDGGEESPEGISKPVVPADLINHANREGWTAAHIAASKGFKNCLEILCRHGGLEPERRDKCNRTVHDVATDDCKHLLENLNALKIPLRISVGEIEPSNYGSDDLECENTICALNIRKQTSWDDFSKAVSQALTNHFQAISSDGWWSLEDVTCNNTTDSNIGLSARSIRSITLGNVPWSVGQSFAQSPWDFMRKNKAEHITVLLSGPQEGCLSSVTYASMIPLQMMQNYLRLVEQYHNVIFHGPEGSLQDYIVHQLALCLKHRQMAAGFSCEIVRAEVDAGFSKEQLLDLFISSACLIPVKQSPSKKKIIIILENLEKSSLSELLRDFLAPLENRSTESPCTFQKGNGLSECYYFHENCFLMGTIAKACLQGSDLLVQQHFRWVQLRWDGEPMQGLLQRFLRRKVVNKFKGQAPSPCDPVCKIVDWALSVWRQLNSCLARLGTPEALLGPKYFLSCPVVPGHAQVTVKWMSKLWNGVIAPRVQEAILSRASVKRQPGFGQTTAKRHPSQGQQAVVKAALSILLNKAVLHGCPLPRAELDQHTADFKGGSFPLSIVSSYNTCNKKKGESGAWRKVNTSPRRKSGRFSLPTWNKPDLSTEGMKNKTISQLNCNRNASLSKQKSLENDLSLTLNLDQRLSLGSDDEADLVKELQSMCSSKSESDISKIADSRDDLRMFDSSGNNPVLSATINNLRMPVSQKEVSPLSSHQTTECSNSKSKTELGVSRVKSFLPVPRSKVTQCSQNTKRSSSSSNTRQIEINNNSKEVNWNLHKNEHLEKPNK</sequence>
<accession>Q8WZ74</accession>
<accession>O43389</accession>
<accession>Q7LG11</accession>
<accession>Q9C0A5</accession>
<keyword id="KW-0040">ANK repeat</keyword>
<keyword id="KW-0966">Cell projection</keyword>
<keyword id="KW-0175">Coiled coil</keyword>
<keyword id="KW-0963">Cytoplasm</keyword>
<keyword id="KW-0488">Methylation</keyword>
<keyword id="KW-0597">Phosphoprotein</keyword>
<keyword id="KW-1267">Proteomics identification</keyword>
<keyword id="KW-1185">Reference proteome</keyword>
<keyword id="KW-0677">Repeat</keyword>
<keyword id="KW-0770">Synapse</keyword>
<protein>
    <recommendedName>
        <fullName>Cortactin-binding protein 2</fullName>
        <shortName>CortBP2</shortName>
    </recommendedName>
</protein>
<feature type="chain" id="PRO_0000227002" description="Cortactin-binding protein 2">
    <location>
        <begin position="1"/>
        <end position="1663"/>
    </location>
</feature>
<feature type="repeat" description="ANK 1">
    <location>
        <begin position="709"/>
        <end position="739"/>
    </location>
</feature>
<feature type="repeat" description="ANK 2">
    <location>
        <begin position="743"/>
        <end position="772"/>
    </location>
</feature>
<feature type="repeat" description="ANK 3">
    <location>
        <begin position="776"/>
        <end position="805"/>
    </location>
</feature>
<feature type="repeat" description="ANK 4">
    <location>
        <begin position="809"/>
        <end position="838"/>
    </location>
</feature>
<feature type="repeat" description="ANK 5">
    <location>
        <begin position="842"/>
        <end position="871"/>
    </location>
</feature>
<feature type="repeat" description="ANK 6">
    <location>
        <begin position="912"/>
        <end position="942"/>
    </location>
</feature>
<feature type="region of interest" description="Disordered" evidence="4">
    <location>
        <begin position="1"/>
        <end position="23"/>
    </location>
</feature>
<feature type="region of interest" description="Disordered" evidence="4">
    <location>
        <begin position="203"/>
        <end position="222"/>
    </location>
</feature>
<feature type="region of interest" description="Disordered" evidence="4">
    <location>
        <begin position="367"/>
        <end position="440"/>
    </location>
</feature>
<feature type="region of interest" description="Disordered" evidence="4">
    <location>
        <begin position="454"/>
        <end position="478"/>
    </location>
</feature>
<feature type="region of interest" description="Disordered" evidence="4">
    <location>
        <begin position="498"/>
        <end position="616"/>
    </location>
</feature>
<feature type="region of interest" description="Disordered" evidence="4">
    <location>
        <begin position="1449"/>
        <end position="1482"/>
    </location>
</feature>
<feature type="region of interest" description="Disordered" evidence="4">
    <location>
        <begin position="1581"/>
        <end position="1663"/>
    </location>
</feature>
<feature type="coiled-coil region" evidence="3">
    <location>
        <begin position="119"/>
        <end position="276"/>
    </location>
</feature>
<feature type="compositionally biased region" description="Low complexity" evidence="4">
    <location>
        <begin position="386"/>
        <end position="396"/>
    </location>
</feature>
<feature type="compositionally biased region" description="Polar residues" evidence="4">
    <location>
        <begin position="583"/>
        <end position="593"/>
    </location>
</feature>
<feature type="compositionally biased region" description="Polar residues" evidence="4">
    <location>
        <begin position="1582"/>
        <end position="1599"/>
    </location>
</feature>
<feature type="compositionally biased region" description="Low complexity" evidence="4">
    <location>
        <begin position="1624"/>
        <end position="1638"/>
    </location>
</feature>
<feature type="compositionally biased region" description="Polar residues" evidence="4">
    <location>
        <begin position="1639"/>
        <end position="1648"/>
    </location>
</feature>
<feature type="compositionally biased region" description="Basic and acidic residues" evidence="4">
    <location>
        <begin position="1653"/>
        <end position="1663"/>
    </location>
</feature>
<feature type="modified residue" description="Asymmetric dimethylarginine" evidence="1">
    <location>
        <position position="498"/>
    </location>
</feature>
<feature type="modified residue" description="Phosphoserine" evidence="7 8">
    <location>
        <position position="1524"/>
    </location>
</feature>
<feature type="sequence variant" id="VAR_048294" description="In dbSNP:rs10274022.">
    <original>Q</original>
    <variation>K</variation>
    <location>
        <position position="1148"/>
    </location>
</feature>
<feature type="sequence variant" id="VAR_025535" description="In dbSNP:rs62617115." evidence="5">
    <original>L</original>
    <variation>V</variation>
    <location>
        <position position="1213"/>
    </location>
</feature>